<sequence>MSRREDGRLDDELRPVVITRGFTSHPAGSVLVEFGQTRVMCTASVTEGVPRWRKGSGQGWLTAEYAMLPAATHDRSDRESVKGRIGGRTQEISRLIGRSLRACIDLAALGENTIAIDCDVLQADGGTRTAAITGAYVALSDAVTWLAAAGRLSDPRPLSCAIAAVSVGVVDGRVRVDLPYSEDSRAEVDMNVVATDTGTLVEIQGTGEGATFPRSTLDKMLDAALGATEQLFVLQREALDAPYPGVLPEGPAPKKAFGS</sequence>
<gene>
    <name evidence="1" type="primary">rph</name>
    <name type="ordered locus">MSMEG_4901</name>
    <name type="ordered locus">MSMEI_4774</name>
</gene>
<reference key="1">
    <citation type="submission" date="2006-10" db="EMBL/GenBank/DDBJ databases">
        <authorList>
            <person name="Fleischmann R.D."/>
            <person name="Dodson R.J."/>
            <person name="Haft D.H."/>
            <person name="Merkel J.S."/>
            <person name="Nelson W.C."/>
            <person name="Fraser C.M."/>
        </authorList>
    </citation>
    <scope>NUCLEOTIDE SEQUENCE [LARGE SCALE GENOMIC DNA]</scope>
    <source>
        <strain>ATCC 700084 / mc(2)155</strain>
    </source>
</reference>
<reference key="2">
    <citation type="journal article" date="2007" name="Genome Biol.">
        <title>Interrupted coding sequences in Mycobacterium smegmatis: authentic mutations or sequencing errors?</title>
        <authorList>
            <person name="Deshayes C."/>
            <person name="Perrodou E."/>
            <person name="Gallien S."/>
            <person name="Euphrasie D."/>
            <person name="Schaeffer C."/>
            <person name="Van-Dorsselaer A."/>
            <person name="Poch O."/>
            <person name="Lecompte O."/>
            <person name="Reyrat J.-M."/>
        </authorList>
    </citation>
    <scope>NUCLEOTIDE SEQUENCE [LARGE SCALE GENOMIC DNA]</scope>
    <source>
        <strain>ATCC 700084 / mc(2)155</strain>
    </source>
</reference>
<reference key="3">
    <citation type="journal article" date="2009" name="Genome Res.">
        <title>Ortho-proteogenomics: multiple proteomes investigation through orthology and a new MS-based protocol.</title>
        <authorList>
            <person name="Gallien S."/>
            <person name="Perrodou E."/>
            <person name="Carapito C."/>
            <person name="Deshayes C."/>
            <person name="Reyrat J.-M."/>
            <person name="Van Dorsselaer A."/>
            <person name="Poch O."/>
            <person name="Schaeffer C."/>
            <person name="Lecompte O."/>
        </authorList>
    </citation>
    <scope>NUCLEOTIDE SEQUENCE [LARGE SCALE GENOMIC DNA]</scope>
    <scope>IDENTIFICATION BY MASS SPECTROMETRY [LARGE SCALE ANALYSIS]</scope>
    <source>
        <strain>ATCC 700084 / mc(2)155</strain>
    </source>
</reference>
<comment type="function">
    <text evidence="1">Phosphorolytic 3'-5' exoribonuclease that plays an important role in tRNA 3'-end maturation. Removes nucleotide residues following the 3'-CCA terminus of tRNAs; can also add nucleotides to the ends of RNA molecules by using nucleoside diphosphates as substrates, but this may not be physiologically important. Probably plays a role in initiation of 16S rRNA degradation (leading to ribosome degradation) during starvation.</text>
</comment>
<comment type="catalytic activity">
    <reaction evidence="1">
        <text>tRNA(n+1) + phosphate = tRNA(n) + a ribonucleoside 5'-diphosphate</text>
        <dbReference type="Rhea" id="RHEA:10628"/>
        <dbReference type="Rhea" id="RHEA-COMP:17343"/>
        <dbReference type="Rhea" id="RHEA-COMP:17344"/>
        <dbReference type="ChEBI" id="CHEBI:43474"/>
        <dbReference type="ChEBI" id="CHEBI:57930"/>
        <dbReference type="ChEBI" id="CHEBI:173114"/>
        <dbReference type="EC" id="2.7.7.56"/>
    </reaction>
</comment>
<comment type="subunit">
    <text evidence="1">Homohexameric ring arranged as a trimer of dimers.</text>
</comment>
<comment type="similarity">
    <text evidence="1">Belongs to the RNase PH family.</text>
</comment>
<organism>
    <name type="scientific">Mycolicibacterium smegmatis (strain ATCC 700084 / mc(2)155)</name>
    <name type="common">Mycobacterium smegmatis</name>
    <dbReference type="NCBI Taxonomy" id="246196"/>
    <lineage>
        <taxon>Bacteria</taxon>
        <taxon>Bacillati</taxon>
        <taxon>Actinomycetota</taxon>
        <taxon>Actinomycetes</taxon>
        <taxon>Mycobacteriales</taxon>
        <taxon>Mycobacteriaceae</taxon>
        <taxon>Mycolicibacterium</taxon>
    </lineage>
</organism>
<keyword id="KW-0548">Nucleotidyltransferase</keyword>
<keyword id="KW-1185">Reference proteome</keyword>
<keyword id="KW-0694">RNA-binding</keyword>
<keyword id="KW-0698">rRNA processing</keyword>
<keyword id="KW-0808">Transferase</keyword>
<keyword id="KW-0819">tRNA processing</keyword>
<keyword id="KW-0820">tRNA-binding</keyword>
<feature type="chain" id="PRO_1000024830" description="Ribonuclease PH">
    <location>
        <begin position="1"/>
        <end position="259"/>
    </location>
</feature>
<feature type="binding site" evidence="1">
    <location>
        <position position="88"/>
    </location>
    <ligand>
        <name>phosphate</name>
        <dbReference type="ChEBI" id="CHEBI:43474"/>
        <note>substrate</note>
    </ligand>
</feature>
<feature type="binding site" evidence="1">
    <location>
        <begin position="126"/>
        <end position="128"/>
    </location>
    <ligand>
        <name>phosphate</name>
        <dbReference type="ChEBI" id="CHEBI:43474"/>
        <note>substrate</note>
    </ligand>
</feature>
<accession>A0R1W8</accession>
<accession>I7G6A0</accession>
<dbReference type="EC" id="2.7.7.56" evidence="1"/>
<dbReference type="EMBL" id="CP000480">
    <property type="protein sequence ID" value="ABK70048.1"/>
    <property type="molecule type" value="Genomic_DNA"/>
</dbReference>
<dbReference type="EMBL" id="CP001663">
    <property type="protein sequence ID" value="AFP41222.1"/>
    <property type="molecule type" value="Genomic_DNA"/>
</dbReference>
<dbReference type="RefSeq" id="WP_011730177.1">
    <property type="nucleotide sequence ID" value="NZ_SIJM01000024.1"/>
</dbReference>
<dbReference type="RefSeq" id="YP_889156.1">
    <property type="nucleotide sequence ID" value="NC_008596.1"/>
</dbReference>
<dbReference type="SMR" id="A0R1W8"/>
<dbReference type="STRING" id="246196.MSMEG_4901"/>
<dbReference type="PaxDb" id="246196-MSMEI_4774"/>
<dbReference type="GeneID" id="93459571"/>
<dbReference type="KEGG" id="msb:LJ00_24235"/>
<dbReference type="KEGG" id="msg:MSMEI_4774"/>
<dbReference type="KEGG" id="msm:MSMEG_4901"/>
<dbReference type="PATRIC" id="fig|246196.19.peg.4782"/>
<dbReference type="eggNOG" id="COG2123">
    <property type="taxonomic scope" value="Bacteria"/>
</dbReference>
<dbReference type="OrthoDB" id="9802265at2"/>
<dbReference type="Proteomes" id="UP000000757">
    <property type="component" value="Chromosome"/>
</dbReference>
<dbReference type="Proteomes" id="UP000006158">
    <property type="component" value="Chromosome"/>
</dbReference>
<dbReference type="GO" id="GO:0000175">
    <property type="term" value="F:3'-5'-RNA exonuclease activity"/>
    <property type="evidence" value="ECO:0007669"/>
    <property type="project" value="UniProtKB-UniRule"/>
</dbReference>
<dbReference type="GO" id="GO:0000049">
    <property type="term" value="F:tRNA binding"/>
    <property type="evidence" value="ECO:0007669"/>
    <property type="project" value="UniProtKB-UniRule"/>
</dbReference>
<dbReference type="GO" id="GO:0009022">
    <property type="term" value="F:tRNA nucleotidyltransferase activity"/>
    <property type="evidence" value="ECO:0007669"/>
    <property type="project" value="UniProtKB-UniRule"/>
</dbReference>
<dbReference type="GO" id="GO:0016075">
    <property type="term" value="P:rRNA catabolic process"/>
    <property type="evidence" value="ECO:0007669"/>
    <property type="project" value="UniProtKB-UniRule"/>
</dbReference>
<dbReference type="GO" id="GO:0006364">
    <property type="term" value="P:rRNA processing"/>
    <property type="evidence" value="ECO:0007669"/>
    <property type="project" value="UniProtKB-KW"/>
</dbReference>
<dbReference type="GO" id="GO:0008033">
    <property type="term" value="P:tRNA processing"/>
    <property type="evidence" value="ECO:0007669"/>
    <property type="project" value="UniProtKB-UniRule"/>
</dbReference>
<dbReference type="CDD" id="cd11362">
    <property type="entry name" value="RNase_PH_bact"/>
    <property type="match status" value="1"/>
</dbReference>
<dbReference type="FunFam" id="3.30.230.70:FF:000003">
    <property type="entry name" value="Ribonuclease PH"/>
    <property type="match status" value="1"/>
</dbReference>
<dbReference type="Gene3D" id="3.30.230.70">
    <property type="entry name" value="GHMP Kinase, N-terminal domain"/>
    <property type="match status" value="1"/>
</dbReference>
<dbReference type="HAMAP" id="MF_00564">
    <property type="entry name" value="RNase_PH"/>
    <property type="match status" value="1"/>
</dbReference>
<dbReference type="InterPro" id="IPR001247">
    <property type="entry name" value="ExoRNase_PH_dom1"/>
</dbReference>
<dbReference type="InterPro" id="IPR015847">
    <property type="entry name" value="ExoRNase_PH_dom2"/>
</dbReference>
<dbReference type="InterPro" id="IPR036345">
    <property type="entry name" value="ExoRNase_PH_dom2_sf"/>
</dbReference>
<dbReference type="InterPro" id="IPR027408">
    <property type="entry name" value="PNPase/RNase_PH_dom_sf"/>
</dbReference>
<dbReference type="InterPro" id="IPR020568">
    <property type="entry name" value="Ribosomal_Su5_D2-typ_SF"/>
</dbReference>
<dbReference type="InterPro" id="IPR050080">
    <property type="entry name" value="RNase_PH"/>
</dbReference>
<dbReference type="InterPro" id="IPR002381">
    <property type="entry name" value="RNase_PH_bac-type"/>
</dbReference>
<dbReference type="InterPro" id="IPR018336">
    <property type="entry name" value="RNase_PH_CS"/>
</dbReference>
<dbReference type="NCBIfam" id="TIGR01966">
    <property type="entry name" value="RNasePH"/>
    <property type="match status" value="1"/>
</dbReference>
<dbReference type="PANTHER" id="PTHR11953">
    <property type="entry name" value="EXOSOME COMPLEX COMPONENT"/>
    <property type="match status" value="1"/>
</dbReference>
<dbReference type="PANTHER" id="PTHR11953:SF0">
    <property type="entry name" value="EXOSOME COMPLEX COMPONENT RRP41"/>
    <property type="match status" value="1"/>
</dbReference>
<dbReference type="Pfam" id="PF01138">
    <property type="entry name" value="RNase_PH"/>
    <property type="match status" value="1"/>
</dbReference>
<dbReference type="Pfam" id="PF03725">
    <property type="entry name" value="RNase_PH_C"/>
    <property type="match status" value="1"/>
</dbReference>
<dbReference type="SUPFAM" id="SSF55666">
    <property type="entry name" value="Ribonuclease PH domain 2-like"/>
    <property type="match status" value="1"/>
</dbReference>
<dbReference type="SUPFAM" id="SSF54211">
    <property type="entry name" value="Ribosomal protein S5 domain 2-like"/>
    <property type="match status" value="1"/>
</dbReference>
<dbReference type="PROSITE" id="PS01277">
    <property type="entry name" value="RIBONUCLEASE_PH"/>
    <property type="match status" value="1"/>
</dbReference>
<protein>
    <recommendedName>
        <fullName evidence="1">Ribonuclease PH</fullName>
        <shortName evidence="1">RNase PH</shortName>
        <ecNumber evidence="1">2.7.7.56</ecNumber>
    </recommendedName>
    <alternativeName>
        <fullName evidence="1">tRNA nucleotidyltransferase</fullName>
    </alternativeName>
</protein>
<evidence type="ECO:0000255" key="1">
    <source>
        <dbReference type="HAMAP-Rule" id="MF_00564"/>
    </source>
</evidence>
<name>RNPH_MYCS2</name>
<proteinExistence type="evidence at protein level"/>